<sequence>MKKDIIILGIESSCDDTSAAVVRNETMLSNVIAGQAVHKAYGGVVPELASRAHQQNIVPVVSEAIKRAGIRKEEIDAIAFTRGPGLLGSLLVGTSFAKGLSLSLGIPMLEVNHLHAHVLANFLREPGEESQHPSFPFLCLLVSGGNSQIILVRSPYDMEVIGQTIDDAAGEAFDKCAKVMGLGYPGGPIVNKLASEGNPDAFRFARPHVSGYDYSFSGLKTSFLYTLRDKLAEDPDFIEKNKADLCASLQHTVIDILMKKLRQAAKDHSIKQVALAGGVSANTGLRDAFHDHARRYGWTVFIPKFAYTTDNAAMVAISGYYKYLQGDFCPIDAVPFSRITV</sequence>
<keyword id="KW-0012">Acyltransferase</keyword>
<keyword id="KW-0963">Cytoplasm</keyword>
<keyword id="KW-0408">Iron</keyword>
<keyword id="KW-0479">Metal-binding</keyword>
<keyword id="KW-1185">Reference proteome</keyword>
<keyword id="KW-0808">Transferase</keyword>
<keyword id="KW-0819">tRNA processing</keyword>
<protein>
    <recommendedName>
        <fullName evidence="1">tRNA N6-adenosine threonylcarbamoyltransferase</fullName>
        <ecNumber evidence="1">2.3.1.234</ecNumber>
    </recommendedName>
    <alternativeName>
        <fullName evidence="1">N6-L-threonylcarbamoyladenine synthase</fullName>
        <shortName evidence="1">t(6)A synthase</shortName>
    </alternativeName>
    <alternativeName>
        <fullName evidence="1">t(6)A37 threonylcarbamoyladenosine biosynthesis protein TsaD</fullName>
    </alternativeName>
    <alternativeName>
        <fullName evidence="1">tRNA threonylcarbamoyladenosine biosynthesis protein TsaD</fullName>
    </alternativeName>
</protein>
<evidence type="ECO:0000255" key="1">
    <source>
        <dbReference type="HAMAP-Rule" id="MF_01445"/>
    </source>
</evidence>
<gene>
    <name evidence="1" type="primary">tsaD</name>
    <name type="synonym">gcp</name>
    <name type="ordered locus">PG_1724</name>
</gene>
<name>TSAD_PORGI</name>
<comment type="function">
    <text evidence="1">Required for the formation of a threonylcarbamoyl group on adenosine at position 37 (t(6)A37) in tRNAs that read codons beginning with adenine. Is involved in the transfer of the threonylcarbamoyl moiety of threonylcarbamoyl-AMP (TC-AMP) to the N6 group of A37, together with TsaE and TsaB. TsaD likely plays a direct catalytic role in this reaction.</text>
</comment>
<comment type="catalytic activity">
    <reaction evidence="1">
        <text>L-threonylcarbamoyladenylate + adenosine(37) in tRNA = N(6)-L-threonylcarbamoyladenosine(37) in tRNA + AMP + H(+)</text>
        <dbReference type="Rhea" id="RHEA:37059"/>
        <dbReference type="Rhea" id="RHEA-COMP:10162"/>
        <dbReference type="Rhea" id="RHEA-COMP:10163"/>
        <dbReference type="ChEBI" id="CHEBI:15378"/>
        <dbReference type="ChEBI" id="CHEBI:73682"/>
        <dbReference type="ChEBI" id="CHEBI:74411"/>
        <dbReference type="ChEBI" id="CHEBI:74418"/>
        <dbReference type="ChEBI" id="CHEBI:456215"/>
        <dbReference type="EC" id="2.3.1.234"/>
    </reaction>
</comment>
<comment type="cofactor">
    <cofactor evidence="1">
        <name>Fe(2+)</name>
        <dbReference type="ChEBI" id="CHEBI:29033"/>
    </cofactor>
    <text evidence="1">Binds 1 Fe(2+) ion per subunit.</text>
</comment>
<comment type="subcellular location">
    <subcellularLocation>
        <location evidence="1">Cytoplasm</location>
    </subcellularLocation>
</comment>
<comment type="similarity">
    <text evidence="1">Belongs to the KAE1 / TsaD family.</text>
</comment>
<feature type="chain" id="PRO_0000303476" description="tRNA N6-adenosine threonylcarbamoyltransferase">
    <location>
        <begin position="1"/>
        <end position="341"/>
    </location>
</feature>
<feature type="binding site" evidence="1">
    <location>
        <position position="113"/>
    </location>
    <ligand>
        <name>Fe cation</name>
        <dbReference type="ChEBI" id="CHEBI:24875"/>
    </ligand>
</feature>
<feature type="binding site" evidence="1">
    <location>
        <position position="117"/>
    </location>
    <ligand>
        <name>Fe cation</name>
        <dbReference type="ChEBI" id="CHEBI:24875"/>
    </ligand>
</feature>
<feature type="binding site" evidence="1">
    <location>
        <begin position="141"/>
        <end position="145"/>
    </location>
    <ligand>
        <name>substrate</name>
    </ligand>
</feature>
<feature type="binding site" evidence="1">
    <location>
        <position position="174"/>
    </location>
    <ligand>
        <name>substrate</name>
    </ligand>
</feature>
<feature type="binding site" evidence="1">
    <location>
        <position position="187"/>
    </location>
    <ligand>
        <name>substrate</name>
    </ligand>
</feature>
<feature type="binding site" evidence="1">
    <location>
        <position position="282"/>
    </location>
    <ligand>
        <name>substrate</name>
    </ligand>
</feature>
<feature type="binding site" evidence="1">
    <location>
        <position position="310"/>
    </location>
    <ligand>
        <name>Fe cation</name>
        <dbReference type="ChEBI" id="CHEBI:24875"/>
    </ligand>
</feature>
<proteinExistence type="inferred from homology"/>
<organism>
    <name type="scientific">Porphyromonas gingivalis (strain ATCC BAA-308 / W83)</name>
    <dbReference type="NCBI Taxonomy" id="242619"/>
    <lineage>
        <taxon>Bacteria</taxon>
        <taxon>Pseudomonadati</taxon>
        <taxon>Bacteroidota</taxon>
        <taxon>Bacteroidia</taxon>
        <taxon>Bacteroidales</taxon>
        <taxon>Porphyromonadaceae</taxon>
        <taxon>Porphyromonas</taxon>
    </lineage>
</organism>
<dbReference type="EC" id="2.3.1.234" evidence="1"/>
<dbReference type="EMBL" id="AE015924">
    <property type="protein sequence ID" value="AAQ66731.1"/>
    <property type="molecule type" value="Genomic_DNA"/>
</dbReference>
<dbReference type="RefSeq" id="WP_005874479.1">
    <property type="nucleotide sequence ID" value="NC_002950.2"/>
</dbReference>
<dbReference type="SMR" id="Q7MU42"/>
<dbReference type="STRING" id="242619.PG_1724"/>
<dbReference type="EnsemblBacteria" id="AAQ66731">
    <property type="protein sequence ID" value="AAQ66731"/>
    <property type="gene ID" value="PG_1724"/>
</dbReference>
<dbReference type="KEGG" id="pgi:PG_1724"/>
<dbReference type="PATRIC" id="fig|242619.8.peg.1595"/>
<dbReference type="eggNOG" id="COG0533">
    <property type="taxonomic scope" value="Bacteria"/>
</dbReference>
<dbReference type="HOGENOM" id="CLU_023208_0_2_10"/>
<dbReference type="BioCyc" id="PGIN242619:G1G02-1610-MONOMER"/>
<dbReference type="Proteomes" id="UP000000588">
    <property type="component" value="Chromosome"/>
</dbReference>
<dbReference type="GO" id="GO:0005737">
    <property type="term" value="C:cytoplasm"/>
    <property type="evidence" value="ECO:0007669"/>
    <property type="project" value="UniProtKB-SubCell"/>
</dbReference>
<dbReference type="GO" id="GO:0005506">
    <property type="term" value="F:iron ion binding"/>
    <property type="evidence" value="ECO:0007669"/>
    <property type="project" value="UniProtKB-UniRule"/>
</dbReference>
<dbReference type="GO" id="GO:0061711">
    <property type="term" value="F:N(6)-L-threonylcarbamoyladenine synthase activity"/>
    <property type="evidence" value="ECO:0007669"/>
    <property type="project" value="UniProtKB-EC"/>
</dbReference>
<dbReference type="GO" id="GO:0002949">
    <property type="term" value="P:tRNA threonylcarbamoyladenosine modification"/>
    <property type="evidence" value="ECO:0007669"/>
    <property type="project" value="UniProtKB-UniRule"/>
</dbReference>
<dbReference type="CDD" id="cd24133">
    <property type="entry name" value="ASKHA_NBD_TsaD_bac"/>
    <property type="match status" value="1"/>
</dbReference>
<dbReference type="FunFam" id="3.30.420.40:FF:000012">
    <property type="entry name" value="tRNA N6-adenosine threonylcarbamoyltransferase"/>
    <property type="match status" value="1"/>
</dbReference>
<dbReference type="FunFam" id="3.30.420.40:FF:000040">
    <property type="entry name" value="tRNA N6-adenosine threonylcarbamoyltransferase"/>
    <property type="match status" value="1"/>
</dbReference>
<dbReference type="Gene3D" id="3.30.420.40">
    <property type="match status" value="2"/>
</dbReference>
<dbReference type="HAMAP" id="MF_01445">
    <property type="entry name" value="TsaD"/>
    <property type="match status" value="1"/>
</dbReference>
<dbReference type="InterPro" id="IPR043129">
    <property type="entry name" value="ATPase_NBD"/>
</dbReference>
<dbReference type="InterPro" id="IPR000905">
    <property type="entry name" value="Gcp-like_dom"/>
</dbReference>
<dbReference type="InterPro" id="IPR017861">
    <property type="entry name" value="KAE1/TsaD"/>
</dbReference>
<dbReference type="InterPro" id="IPR017860">
    <property type="entry name" value="Peptidase_M22_CS"/>
</dbReference>
<dbReference type="InterPro" id="IPR022450">
    <property type="entry name" value="TsaD"/>
</dbReference>
<dbReference type="NCBIfam" id="TIGR00329">
    <property type="entry name" value="gcp_kae1"/>
    <property type="match status" value="1"/>
</dbReference>
<dbReference type="NCBIfam" id="TIGR03723">
    <property type="entry name" value="T6A_TsaD_YgjD"/>
    <property type="match status" value="1"/>
</dbReference>
<dbReference type="PANTHER" id="PTHR11735">
    <property type="entry name" value="TRNA N6-ADENOSINE THREONYLCARBAMOYLTRANSFERASE"/>
    <property type="match status" value="1"/>
</dbReference>
<dbReference type="PANTHER" id="PTHR11735:SF6">
    <property type="entry name" value="TRNA N6-ADENOSINE THREONYLCARBAMOYLTRANSFERASE, MITOCHONDRIAL"/>
    <property type="match status" value="1"/>
</dbReference>
<dbReference type="Pfam" id="PF00814">
    <property type="entry name" value="TsaD"/>
    <property type="match status" value="1"/>
</dbReference>
<dbReference type="PRINTS" id="PR00789">
    <property type="entry name" value="OSIALOPTASE"/>
</dbReference>
<dbReference type="SUPFAM" id="SSF53067">
    <property type="entry name" value="Actin-like ATPase domain"/>
    <property type="match status" value="2"/>
</dbReference>
<dbReference type="PROSITE" id="PS01016">
    <property type="entry name" value="GLYCOPROTEASE"/>
    <property type="match status" value="1"/>
</dbReference>
<accession>Q7MU42</accession>
<reference key="1">
    <citation type="journal article" date="2003" name="J. Bacteriol.">
        <title>Complete genome sequence of the oral pathogenic bacterium Porphyromonas gingivalis strain W83.</title>
        <authorList>
            <person name="Nelson K.E."/>
            <person name="Fleischmann R.D."/>
            <person name="DeBoy R.T."/>
            <person name="Paulsen I.T."/>
            <person name="Fouts D.E."/>
            <person name="Eisen J.A."/>
            <person name="Daugherty S.C."/>
            <person name="Dodson R.J."/>
            <person name="Durkin A.S."/>
            <person name="Gwinn M.L."/>
            <person name="Haft D.H."/>
            <person name="Kolonay J.F."/>
            <person name="Nelson W.C."/>
            <person name="Mason T.M."/>
            <person name="Tallon L."/>
            <person name="Gray J."/>
            <person name="Granger D."/>
            <person name="Tettelin H."/>
            <person name="Dong H."/>
            <person name="Galvin J.L."/>
            <person name="Duncan M.J."/>
            <person name="Dewhirst F.E."/>
            <person name="Fraser C.M."/>
        </authorList>
    </citation>
    <scope>NUCLEOTIDE SEQUENCE [LARGE SCALE GENOMIC DNA]</scope>
    <source>
        <strain>ATCC BAA-308 / W83</strain>
    </source>
</reference>